<feature type="chain" id="PRO_1000163973" description="Ornithine carbamoyltransferase">
    <location>
        <begin position="1"/>
        <end position="300"/>
    </location>
</feature>
<feature type="binding site" evidence="2">
    <location>
        <begin position="50"/>
        <end position="53"/>
    </location>
    <ligand>
        <name>carbamoyl phosphate</name>
        <dbReference type="ChEBI" id="CHEBI:58228"/>
    </ligand>
</feature>
<feature type="binding site" evidence="2">
    <location>
        <position position="77"/>
    </location>
    <ligand>
        <name>carbamoyl phosphate</name>
        <dbReference type="ChEBI" id="CHEBI:58228"/>
    </ligand>
</feature>
<feature type="binding site" evidence="2">
    <location>
        <position position="101"/>
    </location>
    <ligand>
        <name>carbamoyl phosphate</name>
        <dbReference type="ChEBI" id="CHEBI:58228"/>
    </ligand>
</feature>
<feature type="binding site" evidence="2">
    <location>
        <begin position="128"/>
        <end position="131"/>
    </location>
    <ligand>
        <name>carbamoyl phosphate</name>
        <dbReference type="ChEBI" id="CHEBI:58228"/>
    </ligand>
</feature>
<feature type="binding site" evidence="2">
    <location>
        <position position="159"/>
    </location>
    <ligand>
        <name>L-ornithine</name>
        <dbReference type="ChEBI" id="CHEBI:46911"/>
    </ligand>
</feature>
<feature type="binding site" evidence="2">
    <location>
        <position position="219"/>
    </location>
    <ligand>
        <name>L-ornithine</name>
        <dbReference type="ChEBI" id="CHEBI:46911"/>
    </ligand>
</feature>
<feature type="binding site" evidence="2">
    <location>
        <begin position="223"/>
        <end position="224"/>
    </location>
    <ligand>
        <name>L-ornithine</name>
        <dbReference type="ChEBI" id="CHEBI:46911"/>
    </ligand>
</feature>
<feature type="binding site" evidence="2">
    <location>
        <begin position="257"/>
        <end position="258"/>
    </location>
    <ligand>
        <name>carbamoyl phosphate</name>
        <dbReference type="ChEBI" id="CHEBI:58228"/>
    </ligand>
</feature>
<feature type="binding site" evidence="2">
    <location>
        <position position="285"/>
    </location>
    <ligand>
        <name>carbamoyl phosphate</name>
        <dbReference type="ChEBI" id="CHEBI:58228"/>
    </ligand>
</feature>
<evidence type="ECO:0000250" key="1"/>
<evidence type="ECO:0000255" key="2">
    <source>
        <dbReference type="HAMAP-Rule" id="MF_01109"/>
    </source>
</evidence>
<proteinExistence type="inferred from homology"/>
<dbReference type="EC" id="2.1.3.3" evidence="2"/>
<dbReference type="EMBL" id="AM180088">
    <property type="protein sequence ID" value="CAJ53805.1"/>
    <property type="molecule type" value="Genomic_DNA"/>
</dbReference>
<dbReference type="RefSeq" id="WP_011572887.1">
    <property type="nucleotide sequence ID" value="NC_008212.1"/>
</dbReference>
<dbReference type="SMR" id="Q18E28"/>
<dbReference type="STRING" id="362976.HQ_3719A"/>
<dbReference type="GeneID" id="4193712"/>
<dbReference type="KEGG" id="hwa:HQ_3719A"/>
<dbReference type="eggNOG" id="arCOG00912">
    <property type="taxonomic scope" value="Archaea"/>
</dbReference>
<dbReference type="HOGENOM" id="CLU_043846_3_2_2"/>
<dbReference type="UniPathway" id="UPA00254">
    <property type="reaction ID" value="UER00365"/>
</dbReference>
<dbReference type="Proteomes" id="UP000001975">
    <property type="component" value="Chromosome"/>
</dbReference>
<dbReference type="GO" id="GO:0005737">
    <property type="term" value="C:cytoplasm"/>
    <property type="evidence" value="ECO:0007669"/>
    <property type="project" value="UniProtKB-SubCell"/>
</dbReference>
<dbReference type="GO" id="GO:0016597">
    <property type="term" value="F:amino acid binding"/>
    <property type="evidence" value="ECO:0007669"/>
    <property type="project" value="InterPro"/>
</dbReference>
<dbReference type="GO" id="GO:0004585">
    <property type="term" value="F:ornithine carbamoyltransferase activity"/>
    <property type="evidence" value="ECO:0007669"/>
    <property type="project" value="UniProtKB-UniRule"/>
</dbReference>
<dbReference type="GO" id="GO:0042450">
    <property type="term" value="P:arginine biosynthetic process via ornithine"/>
    <property type="evidence" value="ECO:0007669"/>
    <property type="project" value="TreeGrafter"/>
</dbReference>
<dbReference type="GO" id="GO:0019547">
    <property type="term" value="P:arginine catabolic process to ornithine"/>
    <property type="evidence" value="ECO:0007669"/>
    <property type="project" value="UniProtKB-UniPathway"/>
</dbReference>
<dbReference type="GO" id="GO:0019240">
    <property type="term" value="P:citrulline biosynthetic process"/>
    <property type="evidence" value="ECO:0007669"/>
    <property type="project" value="TreeGrafter"/>
</dbReference>
<dbReference type="GO" id="GO:0006526">
    <property type="term" value="P:L-arginine biosynthetic process"/>
    <property type="evidence" value="ECO:0007669"/>
    <property type="project" value="UniProtKB-UniRule"/>
</dbReference>
<dbReference type="FunFam" id="3.40.50.1370:FF:000008">
    <property type="entry name" value="Ornithine carbamoyltransferase"/>
    <property type="match status" value="1"/>
</dbReference>
<dbReference type="Gene3D" id="3.40.50.1370">
    <property type="entry name" value="Aspartate/ornithine carbamoyltransferase"/>
    <property type="match status" value="2"/>
</dbReference>
<dbReference type="HAMAP" id="MF_01109">
    <property type="entry name" value="OTCase"/>
    <property type="match status" value="1"/>
</dbReference>
<dbReference type="InterPro" id="IPR006132">
    <property type="entry name" value="Asp/Orn_carbamoyltranf_P-bd"/>
</dbReference>
<dbReference type="InterPro" id="IPR006130">
    <property type="entry name" value="Asp/Orn_carbamoylTrfase"/>
</dbReference>
<dbReference type="InterPro" id="IPR036901">
    <property type="entry name" value="Asp/Orn_carbamoylTrfase_sf"/>
</dbReference>
<dbReference type="InterPro" id="IPR006131">
    <property type="entry name" value="Asp_carbamoyltransf_Asp/Orn-bd"/>
</dbReference>
<dbReference type="InterPro" id="IPR002292">
    <property type="entry name" value="Orn/put_carbamltrans"/>
</dbReference>
<dbReference type="InterPro" id="IPR024904">
    <property type="entry name" value="OTCase_ArgI"/>
</dbReference>
<dbReference type="NCBIfam" id="TIGR00658">
    <property type="entry name" value="orni_carb_tr"/>
    <property type="match status" value="1"/>
</dbReference>
<dbReference type="NCBIfam" id="NF001986">
    <property type="entry name" value="PRK00779.1"/>
    <property type="match status" value="1"/>
</dbReference>
<dbReference type="PANTHER" id="PTHR45753">
    <property type="entry name" value="ORNITHINE CARBAMOYLTRANSFERASE, MITOCHONDRIAL"/>
    <property type="match status" value="1"/>
</dbReference>
<dbReference type="PANTHER" id="PTHR45753:SF3">
    <property type="entry name" value="ORNITHINE TRANSCARBAMYLASE, MITOCHONDRIAL"/>
    <property type="match status" value="1"/>
</dbReference>
<dbReference type="Pfam" id="PF00185">
    <property type="entry name" value="OTCace"/>
    <property type="match status" value="1"/>
</dbReference>
<dbReference type="Pfam" id="PF02729">
    <property type="entry name" value="OTCace_N"/>
    <property type="match status" value="1"/>
</dbReference>
<dbReference type="PRINTS" id="PR00100">
    <property type="entry name" value="AOTCASE"/>
</dbReference>
<dbReference type="PRINTS" id="PR00102">
    <property type="entry name" value="OTCASE"/>
</dbReference>
<dbReference type="SUPFAM" id="SSF53671">
    <property type="entry name" value="Aspartate/ornithine carbamoyltransferase"/>
    <property type="match status" value="1"/>
</dbReference>
<dbReference type="PROSITE" id="PS00097">
    <property type="entry name" value="CARBAMOYLTRANSFERASE"/>
    <property type="match status" value="1"/>
</dbReference>
<comment type="function">
    <text evidence="1">Reversibly catalyzes the transfer of the carbamoyl group from carbamoyl phosphate (CP) to the N(epsilon) atom of ornithine (ORN) to produce L-citrulline.</text>
</comment>
<comment type="catalytic activity">
    <reaction evidence="2">
        <text>carbamoyl phosphate + L-ornithine = L-citrulline + phosphate + H(+)</text>
        <dbReference type="Rhea" id="RHEA:19513"/>
        <dbReference type="ChEBI" id="CHEBI:15378"/>
        <dbReference type="ChEBI" id="CHEBI:43474"/>
        <dbReference type="ChEBI" id="CHEBI:46911"/>
        <dbReference type="ChEBI" id="CHEBI:57743"/>
        <dbReference type="ChEBI" id="CHEBI:58228"/>
        <dbReference type="EC" id="2.1.3.3"/>
    </reaction>
</comment>
<comment type="pathway">
    <text evidence="2">Amino-acid degradation; L-arginine degradation via ADI pathway; carbamoyl phosphate from L-arginine: step 2/2.</text>
</comment>
<comment type="subcellular location">
    <subcellularLocation>
        <location evidence="2">Cytoplasm</location>
    </subcellularLocation>
</comment>
<comment type="similarity">
    <text evidence="2">Belongs to the aspartate/ornithine carbamoyltransferase superfamily. OTCase family.</text>
</comment>
<reference key="1">
    <citation type="journal article" date="2006" name="BMC Genomics">
        <title>The genome of the square archaeon Haloquadratum walsbyi: life at the limits of water activity.</title>
        <authorList>
            <person name="Bolhuis H."/>
            <person name="Palm P."/>
            <person name="Wende A."/>
            <person name="Falb M."/>
            <person name="Rampp M."/>
            <person name="Rodriguez-Valera F."/>
            <person name="Pfeiffer F."/>
            <person name="Oesterhelt D."/>
        </authorList>
    </citation>
    <scope>NUCLEOTIDE SEQUENCE [LARGE SCALE GENOMIC DNA]</scope>
    <source>
        <strain>DSM 16790 / HBSQ001</strain>
    </source>
</reference>
<organism>
    <name type="scientific">Haloquadratum walsbyi (strain DSM 16790 / HBSQ001)</name>
    <dbReference type="NCBI Taxonomy" id="362976"/>
    <lineage>
        <taxon>Archaea</taxon>
        <taxon>Methanobacteriati</taxon>
        <taxon>Methanobacteriota</taxon>
        <taxon>Stenosarchaea group</taxon>
        <taxon>Halobacteria</taxon>
        <taxon>Halobacteriales</taxon>
        <taxon>Haloferacaceae</taxon>
        <taxon>Haloquadratum</taxon>
    </lineage>
</organism>
<name>OTC_HALWD</name>
<sequence>MPKSSNFLDIDDLTTDELQTILDRATALKHGGDNAQFPGQTLGMLFEKPSTRTRISFETGMTQLGGHAIFLGPDDIQLGHGEPLSDTARVLSGYVDVVMARLFNHDDLLEIAAHADIPVINGLTDDAHPCQTLADLLTIKEEFGGFDDVTVVWIGDGNNVGQSFVIGAAMVGLDLTVVTPSGYGMDQSVLDQATALGHPPTIADTPGAAVSDADVVYTDVWISMGQEDQRNEKLTAFEGYQVNESLLANNSAQVMHCLPAHRGEEITDEVLTGTRTLVWDQAENRLHAQKGLLVELLSEN</sequence>
<protein>
    <recommendedName>
        <fullName evidence="2">Ornithine carbamoyltransferase</fullName>
        <shortName evidence="2">OTCase</shortName>
        <ecNumber evidence="2">2.1.3.3</ecNumber>
    </recommendedName>
</protein>
<keyword id="KW-0056">Arginine metabolism</keyword>
<keyword id="KW-0963">Cytoplasm</keyword>
<keyword id="KW-1185">Reference proteome</keyword>
<keyword id="KW-0808">Transferase</keyword>
<gene>
    <name evidence="2" type="primary">arcB</name>
    <name type="ordered locus">HQ_3719A</name>
</gene>
<accession>Q18E28</accession>